<proteinExistence type="inferred from homology"/>
<accession>A3MJD2</accession>
<comment type="function">
    <text evidence="1">Represses a number of genes involved in the response to DNA damage (SOS response), including recA and lexA. In the presence of single-stranded DNA, RecA interacts with LexA causing an autocatalytic cleavage which disrupts the DNA-binding part of LexA, leading to derepression of the SOS regulon and eventually DNA repair.</text>
</comment>
<comment type="catalytic activity">
    <reaction evidence="1">
        <text>Hydrolysis of Ala-|-Gly bond in repressor LexA.</text>
        <dbReference type="EC" id="3.4.21.88"/>
    </reaction>
</comment>
<comment type="subunit">
    <text evidence="1">Homodimer.</text>
</comment>
<comment type="similarity">
    <text evidence="1">Belongs to the peptidase S24 family.</text>
</comment>
<sequence>MIKLTARQQQVFDLIRRAIERSGFPPTRAEIAAELGFSSPNAAEEHLRALARKGVIELAAGASRGIRLLGIDDAPHQLTLPHAALMQLSLPLVGRVAAGSPILAQEHISQHYACDPALFSSKPDYLLKVRGLSMRDAGILDGDLLAVQKRTEAKDGQIIVARLGDDVTVKRLKRRPGGVELIAENPDYENIFVKAGSAEFALEGIAVGLIRPGEF</sequence>
<evidence type="ECO:0000255" key="1">
    <source>
        <dbReference type="HAMAP-Rule" id="MF_00015"/>
    </source>
</evidence>
<gene>
    <name evidence="1" type="primary">lexA</name>
    <name type="ordered locus">BMA10247_0805</name>
</gene>
<reference key="1">
    <citation type="journal article" date="2010" name="Genome Biol. Evol.">
        <title>Continuing evolution of Burkholderia mallei through genome reduction and large-scale rearrangements.</title>
        <authorList>
            <person name="Losada L."/>
            <person name="Ronning C.M."/>
            <person name="DeShazer D."/>
            <person name="Woods D."/>
            <person name="Fedorova N."/>
            <person name="Kim H.S."/>
            <person name="Shabalina S.A."/>
            <person name="Pearson T.R."/>
            <person name="Brinkac L."/>
            <person name="Tan P."/>
            <person name="Nandi T."/>
            <person name="Crabtree J."/>
            <person name="Badger J."/>
            <person name="Beckstrom-Sternberg S."/>
            <person name="Saqib M."/>
            <person name="Schutzer S.E."/>
            <person name="Keim P."/>
            <person name="Nierman W.C."/>
        </authorList>
    </citation>
    <scope>NUCLEOTIDE SEQUENCE [LARGE SCALE GENOMIC DNA]</scope>
    <source>
        <strain>NCTC 10247</strain>
    </source>
</reference>
<name>LEXA_BURM7</name>
<dbReference type="EC" id="3.4.21.88" evidence="1"/>
<dbReference type="EMBL" id="CP000548">
    <property type="protein sequence ID" value="ABO04489.1"/>
    <property type="molecule type" value="Genomic_DNA"/>
</dbReference>
<dbReference type="RefSeq" id="WP_004191638.1">
    <property type="nucleotide sequence ID" value="NZ_CP007802.1"/>
</dbReference>
<dbReference type="SMR" id="A3MJD2"/>
<dbReference type="MEROPS" id="S24.001"/>
<dbReference type="GeneID" id="93060159"/>
<dbReference type="KEGG" id="bmaz:BM44_2263"/>
<dbReference type="KEGG" id="bmn:BMA10247_0805"/>
<dbReference type="PATRIC" id="fig|320389.8.peg.2539"/>
<dbReference type="GO" id="GO:0003677">
    <property type="term" value="F:DNA binding"/>
    <property type="evidence" value="ECO:0007669"/>
    <property type="project" value="UniProtKB-UniRule"/>
</dbReference>
<dbReference type="GO" id="GO:0004252">
    <property type="term" value="F:serine-type endopeptidase activity"/>
    <property type="evidence" value="ECO:0007669"/>
    <property type="project" value="UniProtKB-UniRule"/>
</dbReference>
<dbReference type="GO" id="GO:0006281">
    <property type="term" value="P:DNA repair"/>
    <property type="evidence" value="ECO:0007669"/>
    <property type="project" value="UniProtKB-UniRule"/>
</dbReference>
<dbReference type="GO" id="GO:0006260">
    <property type="term" value="P:DNA replication"/>
    <property type="evidence" value="ECO:0007669"/>
    <property type="project" value="UniProtKB-UniRule"/>
</dbReference>
<dbReference type="GO" id="GO:0045892">
    <property type="term" value="P:negative regulation of DNA-templated transcription"/>
    <property type="evidence" value="ECO:0007669"/>
    <property type="project" value="UniProtKB-UniRule"/>
</dbReference>
<dbReference type="GO" id="GO:0006508">
    <property type="term" value="P:proteolysis"/>
    <property type="evidence" value="ECO:0007669"/>
    <property type="project" value="InterPro"/>
</dbReference>
<dbReference type="GO" id="GO:0009432">
    <property type="term" value="P:SOS response"/>
    <property type="evidence" value="ECO:0007669"/>
    <property type="project" value="UniProtKB-UniRule"/>
</dbReference>
<dbReference type="CDD" id="cd06529">
    <property type="entry name" value="S24_LexA-like"/>
    <property type="match status" value="1"/>
</dbReference>
<dbReference type="FunFam" id="1.10.10.10:FF:000009">
    <property type="entry name" value="LexA repressor"/>
    <property type="match status" value="1"/>
</dbReference>
<dbReference type="FunFam" id="2.10.109.10:FF:000001">
    <property type="entry name" value="LexA repressor"/>
    <property type="match status" value="1"/>
</dbReference>
<dbReference type="Gene3D" id="2.10.109.10">
    <property type="entry name" value="Umud Fragment, subunit A"/>
    <property type="match status" value="1"/>
</dbReference>
<dbReference type="Gene3D" id="1.10.10.10">
    <property type="entry name" value="Winged helix-like DNA-binding domain superfamily/Winged helix DNA-binding domain"/>
    <property type="match status" value="1"/>
</dbReference>
<dbReference type="HAMAP" id="MF_00015">
    <property type="entry name" value="LexA"/>
    <property type="match status" value="1"/>
</dbReference>
<dbReference type="InterPro" id="IPR006200">
    <property type="entry name" value="LexA"/>
</dbReference>
<dbReference type="InterPro" id="IPR039418">
    <property type="entry name" value="LexA-like"/>
</dbReference>
<dbReference type="InterPro" id="IPR036286">
    <property type="entry name" value="LexA/Signal_pep-like_sf"/>
</dbReference>
<dbReference type="InterPro" id="IPR006199">
    <property type="entry name" value="LexA_DNA-bd_dom"/>
</dbReference>
<dbReference type="InterPro" id="IPR050077">
    <property type="entry name" value="LexA_repressor"/>
</dbReference>
<dbReference type="InterPro" id="IPR006197">
    <property type="entry name" value="Peptidase_S24_LexA"/>
</dbReference>
<dbReference type="InterPro" id="IPR015927">
    <property type="entry name" value="Peptidase_S24_S26A/B/C"/>
</dbReference>
<dbReference type="InterPro" id="IPR036388">
    <property type="entry name" value="WH-like_DNA-bd_sf"/>
</dbReference>
<dbReference type="InterPro" id="IPR036390">
    <property type="entry name" value="WH_DNA-bd_sf"/>
</dbReference>
<dbReference type="NCBIfam" id="TIGR00498">
    <property type="entry name" value="lexA"/>
    <property type="match status" value="1"/>
</dbReference>
<dbReference type="PANTHER" id="PTHR33516">
    <property type="entry name" value="LEXA REPRESSOR"/>
    <property type="match status" value="1"/>
</dbReference>
<dbReference type="PANTHER" id="PTHR33516:SF2">
    <property type="entry name" value="LEXA REPRESSOR-RELATED"/>
    <property type="match status" value="1"/>
</dbReference>
<dbReference type="Pfam" id="PF01726">
    <property type="entry name" value="LexA_DNA_bind"/>
    <property type="match status" value="1"/>
</dbReference>
<dbReference type="Pfam" id="PF00717">
    <property type="entry name" value="Peptidase_S24"/>
    <property type="match status" value="1"/>
</dbReference>
<dbReference type="PRINTS" id="PR00726">
    <property type="entry name" value="LEXASERPTASE"/>
</dbReference>
<dbReference type="SUPFAM" id="SSF51306">
    <property type="entry name" value="LexA/Signal peptidase"/>
    <property type="match status" value="1"/>
</dbReference>
<dbReference type="SUPFAM" id="SSF46785">
    <property type="entry name" value="Winged helix' DNA-binding domain"/>
    <property type="match status" value="1"/>
</dbReference>
<protein>
    <recommendedName>
        <fullName evidence="1">LexA repressor</fullName>
        <ecNumber evidence="1">3.4.21.88</ecNumber>
    </recommendedName>
</protein>
<feature type="chain" id="PRO_1000001268" description="LexA repressor">
    <location>
        <begin position="1"/>
        <end position="215"/>
    </location>
</feature>
<feature type="DNA-binding region" description="H-T-H motif" evidence="1">
    <location>
        <begin position="28"/>
        <end position="48"/>
    </location>
</feature>
<feature type="active site" description="For autocatalytic cleavage activity" evidence="1">
    <location>
        <position position="133"/>
    </location>
</feature>
<feature type="active site" description="For autocatalytic cleavage activity" evidence="1">
    <location>
        <position position="170"/>
    </location>
</feature>
<feature type="site" description="Cleavage; by autolysis" evidence="1">
    <location>
        <begin position="98"/>
        <end position="99"/>
    </location>
</feature>
<organism>
    <name type="scientific">Burkholderia mallei (strain NCTC 10247)</name>
    <dbReference type="NCBI Taxonomy" id="320389"/>
    <lineage>
        <taxon>Bacteria</taxon>
        <taxon>Pseudomonadati</taxon>
        <taxon>Pseudomonadota</taxon>
        <taxon>Betaproteobacteria</taxon>
        <taxon>Burkholderiales</taxon>
        <taxon>Burkholderiaceae</taxon>
        <taxon>Burkholderia</taxon>
        <taxon>pseudomallei group</taxon>
    </lineage>
</organism>
<keyword id="KW-0068">Autocatalytic cleavage</keyword>
<keyword id="KW-0227">DNA damage</keyword>
<keyword id="KW-0234">DNA repair</keyword>
<keyword id="KW-0235">DNA replication</keyword>
<keyword id="KW-0238">DNA-binding</keyword>
<keyword id="KW-0378">Hydrolase</keyword>
<keyword id="KW-0678">Repressor</keyword>
<keyword id="KW-0742">SOS response</keyword>
<keyword id="KW-0804">Transcription</keyword>
<keyword id="KW-0805">Transcription regulation</keyword>